<feature type="chain" id="PRO_0000350274" description="Probable RNA methyltransferase MXAN_6459">
    <location>
        <begin position="1"/>
        <end position="358"/>
    </location>
</feature>
<feature type="domain" description="Radical SAM core" evidence="3">
    <location>
        <begin position="99"/>
        <end position="327"/>
    </location>
</feature>
<feature type="active site" description="Proton acceptor" evidence="2">
    <location>
        <position position="92"/>
    </location>
</feature>
<feature type="active site" description="S-methylcysteine intermediate" evidence="1">
    <location>
        <position position="333"/>
    </location>
</feature>
<feature type="binding site" evidence="1">
    <location>
        <position position="113"/>
    </location>
    <ligand>
        <name>[4Fe-4S] cluster</name>
        <dbReference type="ChEBI" id="CHEBI:49883"/>
        <note>4Fe-4S-S-AdoMet</note>
    </ligand>
</feature>
<feature type="binding site" evidence="1">
    <location>
        <position position="117"/>
    </location>
    <ligand>
        <name>[4Fe-4S] cluster</name>
        <dbReference type="ChEBI" id="CHEBI:49883"/>
        <note>4Fe-4S-S-AdoMet</note>
    </ligand>
</feature>
<feature type="binding site" evidence="1">
    <location>
        <position position="120"/>
    </location>
    <ligand>
        <name>[4Fe-4S] cluster</name>
        <dbReference type="ChEBI" id="CHEBI:49883"/>
        <note>4Fe-4S-S-AdoMet</note>
    </ligand>
</feature>
<feature type="binding site" evidence="1">
    <location>
        <begin position="160"/>
        <end position="161"/>
    </location>
    <ligand>
        <name>S-adenosyl-L-methionine</name>
        <dbReference type="ChEBI" id="CHEBI:59789"/>
    </ligand>
</feature>
<feature type="binding site" evidence="1">
    <location>
        <position position="192"/>
    </location>
    <ligand>
        <name>S-adenosyl-L-methionine</name>
        <dbReference type="ChEBI" id="CHEBI:59789"/>
    </ligand>
</feature>
<feature type="binding site" evidence="1">
    <location>
        <begin position="215"/>
        <end position="217"/>
    </location>
    <ligand>
        <name>S-adenosyl-L-methionine</name>
        <dbReference type="ChEBI" id="CHEBI:59789"/>
    </ligand>
</feature>
<feature type="binding site" evidence="1">
    <location>
        <position position="289"/>
    </location>
    <ligand>
        <name>S-adenosyl-L-methionine</name>
        <dbReference type="ChEBI" id="CHEBI:59789"/>
    </ligand>
</feature>
<feature type="disulfide bond" description="(transient)" evidence="1">
    <location>
        <begin position="106"/>
        <end position="333"/>
    </location>
</feature>
<dbReference type="EC" id="2.1.1.-"/>
<dbReference type="EMBL" id="CP000113">
    <property type="protein sequence ID" value="ABF90544.1"/>
    <property type="molecule type" value="Genomic_DNA"/>
</dbReference>
<dbReference type="RefSeq" id="WP_011556390.1">
    <property type="nucleotide sequence ID" value="NC_008095.1"/>
</dbReference>
<dbReference type="SMR" id="Q1CYE1"/>
<dbReference type="STRING" id="246197.MXAN_6459"/>
<dbReference type="EnsemblBacteria" id="ABF90544">
    <property type="protein sequence ID" value="ABF90544"/>
    <property type="gene ID" value="MXAN_6459"/>
</dbReference>
<dbReference type="GeneID" id="41363665"/>
<dbReference type="KEGG" id="mxa:MXAN_6459"/>
<dbReference type="eggNOG" id="COG0820">
    <property type="taxonomic scope" value="Bacteria"/>
</dbReference>
<dbReference type="HOGENOM" id="CLU_029101_2_0_7"/>
<dbReference type="OrthoDB" id="9793973at2"/>
<dbReference type="Proteomes" id="UP000002402">
    <property type="component" value="Chromosome"/>
</dbReference>
<dbReference type="GO" id="GO:0005737">
    <property type="term" value="C:cytoplasm"/>
    <property type="evidence" value="ECO:0007669"/>
    <property type="project" value="UniProtKB-SubCell"/>
</dbReference>
<dbReference type="GO" id="GO:0051539">
    <property type="term" value="F:4 iron, 4 sulfur cluster binding"/>
    <property type="evidence" value="ECO:0007669"/>
    <property type="project" value="UniProtKB-KW"/>
</dbReference>
<dbReference type="GO" id="GO:0046872">
    <property type="term" value="F:metal ion binding"/>
    <property type="evidence" value="ECO:0007669"/>
    <property type="project" value="UniProtKB-KW"/>
</dbReference>
<dbReference type="GO" id="GO:0008173">
    <property type="term" value="F:RNA methyltransferase activity"/>
    <property type="evidence" value="ECO:0007669"/>
    <property type="project" value="InterPro"/>
</dbReference>
<dbReference type="GO" id="GO:0070475">
    <property type="term" value="P:rRNA base methylation"/>
    <property type="evidence" value="ECO:0007669"/>
    <property type="project" value="TreeGrafter"/>
</dbReference>
<dbReference type="GO" id="GO:0030488">
    <property type="term" value="P:tRNA methylation"/>
    <property type="evidence" value="ECO:0007669"/>
    <property type="project" value="TreeGrafter"/>
</dbReference>
<dbReference type="CDD" id="cd01335">
    <property type="entry name" value="Radical_SAM"/>
    <property type="match status" value="1"/>
</dbReference>
<dbReference type="Gene3D" id="3.20.20.70">
    <property type="entry name" value="Aldolase class I"/>
    <property type="match status" value="1"/>
</dbReference>
<dbReference type="InterPro" id="IPR013785">
    <property type="entry name" value="Aldolase_TIM"/>
</dbReference>
<dbReference type="InterPro" id="IPR040072">
    <property type="entry name" value="Methyltransferase_A"/>
</dbReference>
<dbReference type="InterPro" id="IPR004383">
    <property type="entry name" value="rRNA_lsu_MTrfase_RlmN/Cfr"/>
</dbReference>
<dbReference type="InterPro" id="IPR007197">
    <property type="entry name" value="rSAM"/>
</dbReference>
<dbReference type="NCBIfam" id="NF011040">
    <property type="entry name" value="PRK14470.1"/>
    <property type="match status" value="1"/>
</dbReference>
<dbReference type="PANTHER" id="PTHR30544">
    <property type="entry name" value="23S RRNA METHYLTRANSFERASE"/>
    <property type="match status" value="1"/>
</dbReference>
<dbReference type="PANTHER" id="PTHR30544:SF5">
    <property type="entry name" value="RADICAL SAM CORE DOMAIN-CONTAINING PROTEIN"/>
    <property type="match status" value="1"/>
</dbReference>
<dbReference type="Pfam" id="PF04055">
    <property type="entry name" value="Radical_SAM"/>
    <property type="match status" value="1"/>
</dbReference>
<dbReference type="PIRSF" id="PIRSF006004">
    <property type="entry name" value="CHP00048"/>
    <property type="match status" value="1"/>
</dbReference>
<dbReference type="SFLD" id="SFLDF00275">
    <property type="entry name" value="adenosine_C2_methyltransferase"/>
    <property type="match status" value="1"/>
</dbReference>
<dbReference type="SFLD" id="SFLDS00029">
    <property type="entry name" value="Radical_SAM"/>
    <property type="match status" value="1"/>
</dbReference>
<dbReference type="SUPFAM" id="SSF102114">
    <property type="entry name" value="Radical SAM enzymes"/>
    <property type="match status" value="1"/>
</dbReference>
<dbReference type="PROSITE" id="PS51918">
    <property type="entry name" value="RADICAL_SAM"/>
    <property type="match status" value="1"/>
</dbReference>
<gene>
    <name type="ordered locus">MXAN_6459</name>
</gene>
<accession>Q1CYE1</accession>
<organism>
    <name type="scientific">Myxococcus xanthus (strain DK1622)</name>
    <dbReference type="NCBI Taxonomy" id="246197"/>
    <lineage>
        <taxon>Bacteria</taxon>
        <taxon>Pseudomonadati</taxon>
        <taxon>Myxococcota</taxon>
        <taxon>Myxococcia</taxon>
        <taxon>Myxococcales</taxon>
        <taxon>Cystobacterineae</taxon>
        <taxon>Myxococcaceae</taxon>
        <taxon>Myxococcus</taxon>
    </lineage>
</organism>
<proteinExistence type="inferred from homology"/>
<evidence type="ECO:0000250" key="1"/>
<evidence type="ECO:0000255" key="2"/>
<evidence type="ECO:0000255" key="3">
    <source>
        <dbReference type="PROSITE-ProRule" id="PRU01266"/>
    </source>
</evidence>
<evidence type="ECO:0000305" key="4"/>
<reference key="1">
    <citation type="journal article" date="2006" name="Proc. Natl. Acad. Sci. U.S.A.">
        <title>Evolution of sensory complexity recorded in a myxobacterial genome.</title>
        <authorList>
            <person name="Goldman B.S."/>
            <person name="Nierman W.C."/>
            <person name="Kaiser D."/>
            <person name="Slater S.C."/>
            <person name="Durkin A.S."/>
            <person name="Eisen J.A."/>
            <person name="Ronning C.M."/>
            <person name="Barbazuk W.B."/>
            <person name="Blanchard M."/>
            <person name="Field C."/>
            <person name="Halling C."/>
            <person name="Hinkle G."/>
            <person name="Iartchuk O."/>
            <person name="Kim H.S."/>
            <person name="Mackenzie C."/>
            <person name="Madupu R."/>
            <person name="Miller N."/>
            <person name="Shvartsbeyn A."/>
            <person name="Sullivan S.A."/>
            <person name="Vaudin M."/>
            <person name="Wiegand R."/>
            <person name="Kaplan H.B."/>
        </authorList>
    </citation>
    <scope>NUCLEOTIDE SEQUENCE [LARGE SCALE GENOMIC DNA]</scope>
    <source>
        <strain>DK1622</strain>
    </source>
</reference>
<protein>
    <recommendedName>
        <fullName>Probable RNA methyltransferase MXAN_6459</fullName>
        <ecNumber>2.1.1.-</ecNumber>
    </recommendedName>
</protein>
<keyword id="KW-0004">4Fe-4S</keyword>
<keyword id="KW-0963">Cytoplasm</keyword>
<keyword id="KW-1015">Disulfide bond</keyword>
<keyword id="KW-0408">Iron</keyword>
<keyword id="KW-0411">Iron-sulfur</keyword>
<keyword id="KW-0479">Metal-binding</keyword>
<keyword id="KW-0489">Methyltransferase</keyword>
<keyword id="KW-1185">Reference proteome</keyword>
<keyword id="KW-0949">S-adenosyl-L-methionine</keyword>
<keyword id="KW-0808">Transferase</keyword>
<sequence length="358" mass="39214">MNLKSLSLQELEAALAPLSPSPAAVRKVFAAVFAHGAQSVEDVASARQVPRRVGDHLRAHAEMPKLAIVERRRADDGFVKYLFDSPLGGRIEAVRIPIFDEKYVICVSSQVGCALACDFCMTGKLGFKRNLQTWEILDQVLQVREEADRPVRGVVFMGMGEPLLNYKETLRAADILRHPAGFSIAGEAITFSTAGHVPAIRRYVREGHPYRLAFSVTSAIAEKRAKVLPIEKTHPLPELIAAIREYSEVRRERAMIAYVAISGFNMGREDAEALKVAFEGIRIKVDLIDVTDPTGKYLPPTPEELSAFRDHLQILKSPVARRYSGGKEIGAACGTLAATQYGGTVMPRPAEAPPSTTP</sequence>
<name>Y6459_MYXXD</name>
<comment type="cofactor">
    <cofactor evidence="1">
        <name>[4Fe-4S] cluster</name>
        <dbReference type="ChEBI" id="CHEBI:49883"/>
    </cofactor>
    <text evidence="1">Binds 1 [4Fe-4S] cluster. The cluster is coordinated with 3 cysteines and an exchangeable S-adenosyl-L-methionine.</text>
</comment>
<comment type="subcellular location">
    <subcellularLocation>
        <location evidence="4">Cytoplasm</location>
    </subcellularLocation>
</comment>
<comment type="similarity">
    <text evidence="4">Belongs to the radical SAM superfamily. RlmN family.</text>
</comment>